<organism>
    <name type="scientific">Francisella tularensis subsp. mediasiatica (strain FSC147)</name>
    <dbReference type="NCBI Taxonomy" id="441952"/>
    <lineage>
        <taxon>Bacteria</taxon>
        <taxon>Pseudomonadati</taxon>
        <taxon>Pseudomonadota</taxon>
        <taxon>Gammaproteobacteria</taxon>
        <taxon>Thiotrichales</taxon>
        <taxon>Francisellaceae</taxon>
        <taxon>Francisella</taxon>
    </lineage>
</organism>
<reference key="1">
    <citation type="journal article" date="2009" name="PLoS Pathog.">
        <title>Molecular evolutionary consequences of niche restriction in Francisella tularensis, a facultative intracellular pathogen.</title>
        <authorList>
            <person name="Larsson P."/>
            <person name="Elfsmark D."/>
            <person name="Svensson K."/>
            <person name="Wikstroem P."/>
            <person name="Forsman M."/>
            <person name="Brettin T."/>
            <person name="Keim P."/>
            <person name="Johansson A."/>
        </authorList>
    </citation>
    <scope>NUCLEOTIDE SEQUENCE [LARGE SCALE GENOMIC DNA]</scope>
    <source>
        <strain>FSC147</strain>
    </source>
</reference>
<gene>
    <name evidence="1" type="primary">kdpA</name>
    <name type="ordered locus">FTM_1689</name>
</gene>
<name>KDPA_FRATM</name>
<sequence>MISNFILFALFIVTIALITKPLGSYIFRVFNNERTYLDWLAKPFQRVYLLVLGESSKKEQTAKAYFFSLVSFSVMAFIFVLVILLLQGILPLNTQEIKGMSFPQALNTAVSFITNTNWQSYSGETGVSYFAQMLALAVQNFVSAAVGLCVAIALIRSVARHETATIGNFWNDLGKGVFWILLPISIVIAIVYIFQGVPQNVMAYLHVHTLAGTEQIISQGPIASQEAIKSLGTNGGGFFNANSAHPYENPTVITNYIQMVSIFAIAAALTYTFGKWVGNTKQGWLIFGVMLVLFIISLVVMTISELHGLDFLHSKDIQDIYGQVGHLSNMEGKESRFGVFYSTLYNTVSTSASDGGVNSVLDSYSPLAGMMAMLNMAIGEVIFGGVGAGFYGFFMFLMLAVFIGSLMIGRAPSFLGKRIEANDMKWTMFALLISPCCVLVFTGLAAVIPSVHQTLTNSGAHGFSEILYAYISGANNNGSAFAGLSANTNYLNITIALSMLIGRFGVIFAVIMLAGSLVKKKRSLQMSEISSLDTTSFIFAILVFFTILLIGGLTIFPALGLGPILDQLNLNFL</sequence>
<comment type="function">
    <text evidence="1">Part of the high-affinity ATP-driven potassium transport (or Kdp) system, which catalyzes the hydrolysis of ATP coupled with the electrogenic transport of potassium into the cytoplasm. This subunit binds the periplasmic potassium ions and delivers the ions to the membrane domain of KdpB through an intramembrane tunnel.</text>
</comment>
<comment type="subunit">
    <text evidence="1">The system is composed of three essential subunits: KdpA, KdpB and KdpC.</text>
</comment>
<comment type="subcellular location">
    <subcellularLocation>
        <location evidence="1">Cell inner membrane</location>
        <topology evidence="1">Multi-pass membrane protein</topology>
    </subcellularLocation>
</comment>
<comment type="similarity">
    <text evidence="1">Belongs to the KdpA family.</text>
</comment>
<feature type="chain" id="PRO_1000119344" description="Potassium-transporting ATPase potassium-binding subunit">
    <location>
        <begin position="1"/>
        <end position="573"/>
    </location>
</feature>
<feature type="transmembrane region" description="Helical" evidence="1">
    <location>
        <begin position="6"/>
        <end position="26"/>
    </location>
</feature>
<feature type="transmembrane region" description="Helical" evidence="1">
    <location>
        <begin position="66"/>
        <end position="86"/>
    </location>
</feature>
<feature type="transmembrane region" description="Helical" evidence="1">
    <location>
        <begin position="135"/>
        <end position="155"/>
    </location>
</feature>
<feature type="transmembrane region" description="Helical" evidence="1">
    <location>
        <begin position="177"/>
        <end position="197"/>
    </location>
</feature>
<feature type="transmembrane region" description="Helical" evidence="1">
    <location>
        <begin position="257"/>
        <end position="277"/>
    </location>
</feature>
<feature type="transmembrane region" description="Helical" evidence="1">
    <location>
        <begin position="283"/>
        <end position="303"/>
    </location>
</feature>
<feature type="transmembrane region" description="Helical" evidence="1">
    <location>
        <begin position="382"/>
        <end position="402"/>
    </location>
</feature>
<feature type="transmembrane region" description="Helical" evidence="1">
    <location>
        <begin position="428"/>
        <end position="448"/>
    </location>
</feature>
<feature type="transmembrane region" description="Helical" evidence="1">
    <location>
        <begin position="493"/>
        <end position="513"/>
    </location>
</feature>
<feature type="transmembrane region" description="Helical" evidence="1">
    <location>
        <begin position="537"/>
        <end position="557"/>
    </location>
</feature>
<proteinExistence type="inferred from homology"/>
<evidence type="ECO:0000255" key="1">
    <source>
        <dbReference type="HAMAP-Rule" id="MF_00275"/>
    </source>
</evidence>
<protein>
    <recommendedName>
        <fullName evidence="1">Potassium-transporting ATPase potassium-binding subunit</fullName>
    </recommendedName>
    <alternativeName>
        <fullName evidence="1">ATP phosphohydrolase [potassium-transporting] A chain</fullName>
    </alternativeName>
    <alternativeName>
        <fullName evidence="1">Potassium-binding and translocating subunit A</fullName>
    </alternativeName>
    <alternativeName>
        <fullName evidence="1">Potassium-translocating ATPase A chain</fullName>
    </alternativeName>
</protein>
<keyword id="KW-0997">Cell inner membrane</keyword>
<keyword id="KW-1003">Cell membrane</keyword>
<keyword id="KW-0406">Ion transport</keyword>
<keyword id="KW-0472">Membrane</keyword>
<keyword id="KW-0630">Potassium</keyword>
<keyword id="KW-0633">Potassium transport</keyword>
<keyword id="KW-0812">Transmembrane</keyword>
<keyword id="KW-1133">Transmembrane helix</keyword>
<keyword id="KW-0813">Transport</keyword>
<dbReference type="EMBL" id="CP000915">
    <property type="protein sequence ID" value="ACD31478.1"/>
    <property type="molecule type" value="Genomic_DNA"/>
</dbReference>
<dbReference type="SMR" id="B2SEB4"/>
<dbReference type="KEGG" id="ftm:FTM_1689"/>
<dbReference type="HOGENOM" id="CLU_018614_3_0_6"/>
<dbReference type="GO" id="GO:0005886">
    <property type="term" value="C:plasma membrane"/>
    <property type="evidence" value="ECO:0007669"/>
    <property type="project" value="UniProtKB-SubCell"/>
</dbReference>
<dbReference type="GO" id="GO:0008556">
    <property type="term" value="F:P-type potassium transmembrane transporter activity"/>
    <property type="evidence" value="ECO:0007669"/>
    <property type="project" value="InterPro"/>
</dbReference>
<dbReference type="GO" id="GO:0030955">
    <property type="term" value="F:potassium ion binding"/>
    <property type="evidence" value="ECO:0007669"/>
    <property type="project" value="UniProtKB-UniRule"/>
</dbReference>
<dbReference type="HAMAP" id="MF_00275">
    <property type="entry name" value="KdpA"/>
    <property type="match status" value="1"/>
</dbReference>
<dbReference type="InterPro" id="IPR004623">
    <property type="entry name" value="KdpA"/>
</dbReference>
<dbReference type="NCBIfam" id="TIGR00680">
    <property type="entry name" value="kdpA"/>
    <property type="match status" value="1"/>
</dbReference>
<dbReference type="PANTHER" id="PTHR30607">
    <property type="entry name" value="POTASSIUM-TRANSPORTING ATPASE A CHAIN"/>
    <property type="match status" value="1"/>
</dbReference>
<dbReference type="PANTHER" id="PTHR30607:SF2">
    <property type="entry name" value="POTASSIUM-TRANSPORTING ATPASE POTASSIUM-BINDING SUBUNIT"/>
    <property type="match status" value="1"/>
</dbReference>
<dbReference type="Pfam" id="PF03814">
    <property type="entry name" value="KdpA"/>
    <property type="match status" value="1"/>
</dbReference>
<dbReference type="PIRSF" id="PIRSF001294">
    <property type="entry name" value="K_ATPaseA"/>
    <property type="match status" value="1"/>
</dbReference>
<accession>B2SEB4</accession>